<comment type="function">
    <text evidence="1">Transfers the 4'-phosphopantetheine moiety from coenzyme A to a Ser of acyl-carrier-protein.</text>
</comment>
<comment type="catalytic activity">
    <reaction evidence="1">
        <text>apo-[ACP] + CoA = holo-[ACP] + adenosine 3',5'-bisphosphate + H(+)</text>
        <dbReference type="Rhea" id="RHEA:12068"/>
        <dbReference type="Rhea" id="RHEA-COMP:9685"/>
        <dbReference type="Rhea" id="RHEA-COMP:9690"/>
        <dbReference type="ChEBI" id="CHEBI:15378"/>
        <dbReference type="ChEBI" id="CHEBI:29999"/>
        <dbReference type="ChEBI" id="CHEBI:57287"/>
        <dbReference type="ChEBI" id="CHEBI:58343"/>
        <dbReference type="ChEBI" id="CHEBI:64479"/>
        <dbReference type="EC" id="2.7.8.7"/>
    </reaction>
</comment>
<comment type="cofactor">
    <cofactor evidence="1">
        <name>Mg(2+)</name>
        <dbReference type="ChEBI" id="CHEBI:18420"/>
    </cofactor>
</comment>
<comment type="subcellular location">
    <subcellularLocation>
        <location evidence="1">Cytoplasm</location>
    </subcellularLocation>
</comment>
<comment type="similarity">
    <text evidence="1">Belongs to the P-Pant transferase superfamily. AcpS family.</text>
</comment>
<reference key="1">
    <citation type="journal article" date="2004" name="Nucleic Acids Res.">
        <title>Comparative analysis of the Borrelia garinii genome.</title>
        <authorList>
            <person name="Gloeckner G."/>
            <person name="Lehmann R."/>
            <person name="Romualdi A."/>
            <person name="Pradella S."/>
            <person name="Schulte-Spechtel U."/>
            <person name="Schilhabel M."/>
            <person name="Wilske B."/>
            <person name="Suehnel J."/>
            <person name="Platzer M."/>
        </authorList>
    </citation>
    <scope>NUCLEOTIDE SEQUENCE [LARGE SCALE GENOMIC DNA]</scope>
    <source>
        <strain>ATCC BAA-2496 / DSM 23469 / PBi</strain>
    </source>
</reference>
<proteinExistence type="inferred from homology"/>
<dbReference type="EC" id="2.7.8.7" evidence="1"/>
<dbReference type="EMBL" id="CP000013">
    <property type="protein sequence ID" value="AAU06869.1"/>
    <property type="molecule type" value="Genomic_DNA"/>
</dbReference>
<dbReference type="RefSeq" id="WP_011193365.1">
    <property type="nucleotide sequence ID" value="NZ_CP028872.1"/>
</dbReference>
<dbReference type="SMR" id="Q663A2"/>
<dbReference type="GeneID" id="45160809"/>
<dbReference type="KEGG" id="bga:BG0010"/>
<dbReference type="eggNOG" id="COG0736">
    <property type="taxonomic scope" value="Bacteria"/>
</dbReference>
<dbReference type="HOGENOM" id="CLU_089696_5_0_12"/>
<dbReference type="OrthoDB" id="517356at2"/>
<dbReference type="Proteomes" id="UP000002276">
    <property type="component" value="Chromosome"/>
</dbReference>
<dbReference type="GO" id="GO:0005737">
    <property type="term" value="C:cytoplasm"/>
    <property type="evidence" value="ECO:0007669"/>
    <property type="project" value="UniProtKB-SubCell"/>
</dbReference>
<dbReference type="GO" id="GO:0008897">
    <property type="term" value="F:holo-[acyl-carrier-protein] synthase activity"/>
    <property type="evidence" value="ECO:0007669"/>
    <property type="project" value="UniProtKB-UniRule"/>
</dbReference>
<dbReference type="GO" id="GO:0000287">
    <property type="term" value="F:magnesium ion binding"/>
    <property type="evidence" value="ECO:0007669"/>
    <property type="project" value="UniProtKB-UniRule"/>
</dbReference>
<dbReference type="GO" id="GO:0006633">
    <property type="term" value="P:fatty acid biosynthetic process"/>
    <property type="evidence" value="ECO:0007669"/>
    <property type="project" value="UniProtKB-UniRule"/>
</dbReference>
<dbReference type="Gene3D" id="3.90.470.20">
    <property type="entry name" value="4'-phosphopantetheinyl transferase domain"/>
    <property type="match status" value="1"/>
</dbReference>
<dbReference type="HAMAP" id="MF_00101">
    <property type="entry name" value="AcpS"/>
    <property type="match status" value="1"/>
</dbReference>
<dbReference type="InterPro" id="IPR008278">
    <property type="entry name" value="4-PPantetheinyl_Trfase_dom"/>
</dbReference>
<dbReference type="InterPro" id="IPR037143">
    <property type="entry name" value="4-PPantetheinyl_Trfase_dom_sf"/>
</dbReference>
<dbReference type="InterPro" id="IPR002582">
    <property type="entry name" value="ACPS"/>
</dbReference>
<dbReference type="InterPro" id="IPR004568">
    <property type="entry name" value="Ppantetheine-prot_Trfase_dom"/>
</dbReference>
<dbReference type="NCBIfam" id="TIGR00556">
    <property type="entry name" value="pantethn_trn"/>
    <property type="match status" value="1"/>
</dbReference>
<dbReference type="Pfam" id="PF01648">
    <property type="entry name" value="ACPS"/>
    <property type="match status" value="1"/>
</dbReference>
<dbReference type="SUPFAM" id="SSF56214">
    <property type="entry name" value="4'-phosphopantetheinyl transferase"/>
    <property type="match status" value="1"/>
</dbReference>
<gene>
    <name evidence="1" type="primary">acpS</name>
    <name type="ordered locus">BG0010</name>
</gene>
<feature type="chain" id="PRO_0000175617" description="Holo-[acyl-carrier-protein] synthase">
    <location>
        <begin position="1"/>
        <end position="124"/>
    </location>
</feature>
<feature type="binding site" evidence="1">
    <location>
        <position position="7"/>
    </location>
    <ligand>
        <name>Mg(2+)</name>
        <dbReference type="ChEBI" id="CHEBI:18420"/>
    </ligand>
</feature>
<feature type="binding site" evidence="1">
    <location>
        <position position="55"/>
    </location>
    <ligand>
        <name>Mg(2+)</name>
        <dbReference type="ChEBI" id="CHEBI:18420"/>
    </ligand>
</feature>
<keyword id="KW-0963">Cytoplasm</keyword>
<keyword id="KW-0275">Fatty acid biosynthesis</keyword>
<keyword id="KW-0276">Fatty acid metabolism</keyword>
<keyword id="KW-0444">Lipid biosynthesis</keyword>
<keyword id="KW-0443">Lipid metabolism</keyword>
<keyword id="KW-0460">Magnesium</keyword>
<keyword id="KW-0479">Metal-binding</keyword>
<keyword id="KW-0808">Transferase</keyword>
<name>ACPS_BORGP</name>
<organism>
    <name type="scientific">Borrelia garinii subsp. bavariensis (strain ATCC BAA-2496 / DSM 23469 / PBi)</name>
    <name type="common">Borreliella bavariensis</name>
    <dbReference type="NCBI Taxonomy" id="290434"/>
    <lineage>
        <taxon>Bacteria</taxon>
        <taxon>Pseudomonadati</taxon>
        <taxon>Spirochaetota</taxon>
        <taxon>Spirochaetia</taxon>
        <taxon>Spirochaetales</taxon>
        <taxon>Borreliaceae</taxon>
        <taxon>Borreliella</taxon>
    </lineage>
</organism>
<protein>
    <recommendedName>
        <fullName evidence="1">Holo-[acyl-carrier-protein] synthase</fullName>
        <shortName evidence="1">Holo-ACP synthase</shortName>
        <ecNumber evidence="1">2.7.8.7</ecNumber>
    </recommendedName>
    <alternativeName>
        <fullName evidence="1">4'-phosphopantetheinyl transferase AcpS</fullName>
    </alternativeName>
</protein>
<accession>Q663A2</accession>
<evidence type="ECO:0000255" key="1">
    <source>
        <dbReference type="HAMAP-Rule" id="MF_00101"/>
    </source>
</evidence>
<sequence length="124" mass="14316">MKSIGCDIIKVGRFKNFLENKKKLERFFTHKEIENFKLKGGSVIESLAGKFAAKESLIKALSPLLQHKIHYGLKDIEVIKSLKGNAKFYLHNEIEKFAIKMNLKIYLTISHEKEYAIAFVMVEN</sequence>